<dbReference type="EMBL" id="AP009552">
    <property type="protein sequence ID" value="BAG02339.1"/>
    <property type="molecule type" value="Genomic_DNA"/>
</dbReference>
<dbReference type="RefSeq" id="WP_012265636.1">
    <property type="nucleotide sequence ID" value="NC_010296.1"/>
</dbReference>
<dbReference type="STRING" id="449447.MAE_25170"/>
<dbReference type="PaxDb" id="449447-MAE_25170"/>
<dbReference type="EnsemblBacteria" id="BAG02339">
    <property type="protein sequence ID" value="BAG02339"/>
    <property type="gene ID" value="MAE_25170"/>
</dbReference>
<dbReference type="KEGG" id="mar:MAE_25170"/>
<dbReference type="PATRIC" id="fig|449447.4.peg.2300"/>
<dbReference type="eggNOG" id="COG1333">
    <property type="taxonomic scope" value="Bacteria"/>
</dbReference>
<dbReference type="HOGENOM" id="CLU_034630_0_0_3"/>
<dbReference type="BioCyc" id="MAER449447:MAE_RS10995-MONOMER"/>
<dbReference type="Proteomes" id="UP000001510">
    <property type="component" value="Chromosome"/>
</dbReference>
<dbReference type="GO" id="GO:0031676">
    <property type="term" value="C:plasma membrane-derived thylakoid membrane"/>
    <property type="evidence" value="ECO:0007669"/>
    <property type="project" value="UniProtKB-SubCell"/>
</dbReference>
<dbReference type="GO" id="GO:0017004">
    <property type="term" value="P:cytochrome complex assembly"/>
    <property type="evidence" value="ECO:0007669"/>
    <property type="project" value="UniProtKB-UniRule"/>
</dbReference>
<dbReference type="HAMAP" id="MF_01392">
    <property type="entry name" value="CytC_Ccs1"/>
    <property type="match status" value="1"/>
</dbReference>
<dbReference type="InterPro" id="IPR023494">
    <property type="entry name" value="Cyt_c_bgen_Ccs1/CcsB/ResB"/>
</dbReference>
<dbReference type="InterPro" id="IPR007816">
    <property type="entry name" value="ResB-like_domain"/>
</dbReference>
<dbReference type="PANTHER" id="PTHR31566">
    <property type="entry name" value="CYTOCHROME C BIOGENESIS PROTEIN CCS1, CHLOROPLASTIC"/>
    <property type="match status" value="1"/>
</dbReference>
<dbReference type="PANTHER" id="PTHR31566:SF0">
    <property type="entry name" value="CYTOCHROME C BIOGENESIS PROTEIN CCS1, CHLOROPLASTIC"/>
    <property type="match status" value="1"/>
</dbReference>
<dbReference type="Pfam" id="PF05140">
    <property type="entry name" value="ResB"/>
    <property type="match status" value="2"/>
</dbReference>
<comment type="function">
    <text evidence="1">Required during biogenesis of c-type cytochromes (cytochrome c6 and cytochrome f) at the step of heme attachment.</text>
</comment>
<comment type="subunit">
    <text evidence="1">May interact with CcsA.</text>
</comment>
<comment type="subcellular location">
    <subcellularLocation>
        <location evidence="1">Cellular thylakoid membrane</location>
        <topology evidence="1">Multi-pass membrane protein</topology>
    </subcellularLocation>
</comment>
<comment type="similarity">
    <text evidence="1">Belongs to the Ccs1/CcsB family.</text>
</comment>
<name>CCS1_MICAN</name>
<evidence type="ECO:0000255" key="1">
    <source>
        <dbReference type="HAMAP-Rule" id="MF_01392"/>
    </source>
</evidence>
<accession>B0JHI7</accession>
<reference key="1">
    <citation type="journal article" date="2007" name="DNA Res.">
        <title>Complete genomic structure of the bloom-forming toxic cyanobacterium Microcystis aeruginosa NIES-843.</title>
        <authorList>
            <person name="Kaneko T."/>
            <person name="Nakajima N."/>
            <person name="Okamoto S."/>
            <person name="Suzuki I."/>
            <person name="Tanabe Y."/>
            <person name="Tamaoki M."/>
            <person name="Nakamura Y."/>
            <person name="Kasai F."/>
            <person name="Watanabe A."/>
            <person name="Kawashima K."/>
            <person name="Kishida Y."/>
            <person name="Ono A."/>
            <person name="Shimizu Y."/>
            <person name="Takahashi C."/>
            <person name="Minami C."/>
            <person name="Fujishiro T."/>
            <person name="Kohara M."/>
            <person name="Katoh M."/>
            <person name="Nakazaki N."/>
            <person name="Nakayama S."/>
            <person name="Yamada M."/>
            <person name="Tabata S."/>
            <person name="Watanabe M.M."/>
        </authorList>
    </citation>
    <scope>NUCLEOTIDE SEQUENCE [LARGE SCALE GENOMIC DNA]</scope>
    <source>
        <strain>NIES-843 / IAM M-247</strain>
    </source>
</reference>
<gene>
    <name evidence="1" type="primary">ccsB</name>
    <name evidence="1" type="synonym">ccs1</name>
    <name type="ordered locus">MAE_25170</name>
</gene>
<feature type="chain" id="PRO_0000363614" description="Cytochrome c biogenesis protein CcsB">
    <location>
        <begin position="1"/>
        <end position="447"/>
    </location>
</feature>
<feature type="transmembrane region" description="Helical" evidence="1">
    <location>
        <begin position="28"/>
        <end position="48"/>
    </location>
</feature>
<feature type="transmembrane region" description="Helical" evidence="1">
    <location>
        <begin position="87"/>
        <end position="107"/>
    </location>
</feature>
<feature type="transmembrane region" description="Helical" evidence="1">
    <location>
        <begin position="173"/>
        <end position="193"/>
    </location>
</feature>
<proteinExistence type="inferred from homology"/>
<protein>
    <recommendedName>
        <fullName evidence="1">Cytochrome c biogenesis protein CcsB</fullName>
    </recommendedName>
</protein>
<sequence length="447" mass="49728">MTISETSSNLKNTPPQWGRKFIQTIADLRLAIILLLLIAIFSISGTVIEQGQSLSFYQANYPEKPALFGFLTWKVLLLLGLNHVYSTWWYLSLLILFGSSLTACTFRRQLPALKAARNWQFYQQSRQFQKLALSAELETGSLESLTPLLEKKGYKVFLENNSLYARKGLIGKIGPIIVHAAMLIILAGAIWGALTGFFAQEMVASGDSFQVKNIIEAGPLSKNSLPKDWGIKVNRFWIDYSPKGDIEQFYSDLSVIDNQGQEIDRKTIQVNQPLHHKGVTFYQTSWGIAGVKVQVNNSPILQLPMASLDTKGNGQIWGTWIPTKTDLSEGVSLLTRDLQGTVIVYDAQGDLTSAVREGMTIPINGVNLKIVELVGSTGLQIKADPGVPIVYLGFALLMMGVVMSYFSHSQIWALQSGDRFYIGGKTNRAQVSFEREIIDTIERLKLK</sequence>
<organism>
    <name type="scientific">Microcystis aeruginosa (strain NIES-843 / IAM M-2473)</name>
    <dbReference type="NCBI Taxonomy" id="449447"/>
    <lineage>
        <taxon>Bacteria</taxon>
        <taxon>Bacillati</taxon>
        <taxon>Cyanobacteriota</taxon>
        <taxon>Cyanophyceae</taxon>
        <taxon>Oscillatoriophycideae</taxon>
        <taxon>Chroococcales</taxon>
        <taxon>Microcystaceae</taxon>
        <taxon>Microcystis</taxon>
    </lineage>
</organism>
<keyword id="KW-0201">Cytochrome c-type biogenesis</keyword>
<keyword id="KW-0472">Membrane</keyword>
<keyword id="KW-0793">Thylakoid</keyword>
<keyword id="KW-0812">Transmembrane</keyword>
<keyword id="KW-1133">Transmembrane helix</keyword>